<feature type="chain" id="PRO_0000069675" description="Histamine H1 receptor">
    <location>
        <begin position="1"/>
        <end position="487"/>
    </location>
</feature>
<feature type="topological domain" description="Extracellular" evidence="6">
    <location>
        <begin position="1"/>
        <end position="29"/>
    </location>
</feature>
<feature type="transmembrane region" description="Helical; Name=1" evidence="1">
    <location>
        <begin position="30"/>
        <end position="50"/>
    </location>
</feature>
<feature type="topological domain" description="Cytoplasmic" evidence="6">
    <location>
        <begin position="51"/>
        <end position="64"/>
    </location>
</feature>
<feature type="transmembrane region" description="Helical; Name=2" evidence="1">
    <location>
        <begin position="65"/>
        <end position="89"/>
    </location>
</feature>
<feature type="topological domain" description="Extracellular" evidence="6">
    <location>
        <begin position="90"/>
        <end position="97"/>
    </location>
</feature>
<feature type="transmembrane region" description="Helical; Name=3" evidence="1">
    <location>
        <begin position="98"/>
        <end position="123"/>
    </location>
</feature>
<feature type="topological domain" description="Cytoplasmic" evidence="6">
    <location>
        <begin position="124"/>
        <end position="144"/>
    </location>
</feature>
<feature type="transmembrane region" description="Helical; Name=4" evidence="1">
    <location>
        <begin position="145"/>
        <end position="164"/>
    </location>
</feature>
<feature type="topological domain" description="Extracellular" evidence="6">
    <location>
        <begin position="165"/>
        <end position="188"/>
    </location>
</feature>
<feature type="transmembrane region" description="Helical; Name=5" evidence="1">
    <location>
        <begin position="189"/>
        <end position="211"/>
    </location>
</feature>
<feature type="topological domain" description="Cytoplasmic" evidence="6">
    <location>
        <begin position="212"/>
        <end position="416"/>
    </location>
</feature>
<feature type="transmembrane region" description="Helical; Name=6" evidence="1">
    <location>
        <begin position="417"/>
        <end position="440"/>
    </location>
</feature>
<feature type="topological domain" description="Extracellular" evidence="6">
    <location>
        <begin position="441"/>
        <end position="446"/>
    </location>
</feature>
<feature type="transmembrane region" description="Helical; Name=7" evidence="1">
    <location>
        <begin position="447"/>
        <end position="469"/>
    </location>
</feature>
<feature type="topological domain" description="Cytoplasmic" evidence="6">
    <location>
        <begin position="470"/>
        <end position="487"/>
    </location>
</feature>
<feature type="region of interest" description="Important for agonist binding" evidence="1">
    <location>
        <begin position="107"/>
        <end position="112"/>
    </location>
</feature>
<feature type="region of interest" description="Disordered" evidence="5">
    <location>
        <begin position="238"/>
        <end position="292"/>
    </location>
</feature>
<feature type="region of interest" description="Disordered" evidence="5">
    <location>
        <begin position="345"/>
        <end position="377"/>
    </location>
</feature>
<feature type="region of interest" description="Important for agonist binding" evidence="1">
    <location>
        <begin position="424"/>
        <end position="428"/>
    </location>
</feature>
<feature type="compositionally biased region" description="Basic and acidic residues" evidence="5">
    <location>
        <begin position="238"/>
        <end position="261"/>
    </location>
</feature>
<feature type="compositionally biased region" description="Polar residues" evidence="5">
    <location>
        <begin position="353"/>
        <end position="370"/>
    </location>
</feature>
<feature type="binding site" evidence="1">
    <location>
        <position position="107"/>
    </location>
    <ligand>
        <name>histamine</name>
        <dbReference type="ChEBI" id="CHEBI:58432"/>
    </ligand>
</feature>
<feature type="binding site" evidence="1">
    <location>
        <position position="112"/>
    </location>
    <ligand>
        <name>histamine</name>
        <dbReference type="ChEBI" id="CHEBI:58432"/>
    </ligand>
</feature>
<feature type="binding site" evidence="1">
    <location>
        <position position="198"/>
    </location>
    <ligand>
        <name>histamine</name>
        <dbReference type="ChEBI" id="CHEBI:58432"/>
    </ligand>
</feature>
<feature type="binding site" evidence="1">
    <location>
        <position position="431"/>
    </location>
    <ligand>
        <name>histamine</name>
        <dbReference type="ChEBI" id="CHEBI:58432"/>
    </ligand>
</feature>
<feature type="modified residue" description="Phosphothreonine" evidence="1">
    <location>
        <position position="140"/>
    </location>
</feature>
<feature type="modified residue" description="Phosphothreonine" evidence="1">
    <location>
        <position position="142"/>
    </location>
</feature>
<feature type="modified residue" description="Phosphoserine" evidence="1">
    <location>
        <position position="230"/>
    </location>
</feature>
<feature type="modified residue" description="Phosphothreonine" evidence="1">
    <location>
        <position position="279"/>
    </location>
</feature>
<feature type="modified residue" description="Phosphoserine" evidence="2">
    <location>
        <position position="344"/>
    </location>
</feature>
<feature type="modified residue" description="Phosphoserine" evidence="2">
    <location>
        <position position="347"/>
    </location>
</feature>
<feature type="modified residue" description="Phosphoserine" evidence="2">
    <location>
        <position position="380"/>
    </location>
</feature>
<feature type="modified residue" description="Phosphoserine" evidence="1">
    <location>
        <position position="396"/>
    </location>
</feature>
<feature type="modified residue" description="Phosphoserine" evidence="1">
    <location>
        <position position="398"/>
    </location>
</feature>
<feature type="glycosylation site" description="N-linked (GlcNAc...) asparagine" evidence="3">
    <location>
        <position position="5"/>
    </location>
</feature>
<feature type="glycosylation site" description="N-linked (GlcNAc...) asparagine" evidence="3">
    <location>
        <position position="18"/>
    </location>
</feature>
<feature type="disulfide bond" evidence="4">
    <location>
        <begin position="100"/>
        <end position="180"/>
    </location>
</feature>
<feature type="disulfide bond" evidence="4">
    <location>
        <begin position="441"/>
        <end position="444"/>
    </location>
</feature>
<accession>Q9N2B1</accession>
<reference key="1">
    <citation type="journal article" date="2004" name="Mol. Biol. Evol.">
        <title>Human-specific amino acid changes found in 103 protein-coding genes.</title>
        <authorList>
            <person name="Kitano T."/>
            <person name="Liu Y.-H."/>
            <person name="Ueda S."/>
            <person name="Saitou N."/>
        </authorList>
    </citation>
    <scope>NUCLEOTIDE SEQUENCE [GENOMIC DNA]</scope>
</reference>
<gene>
    <name evidence="1" type="primary">HRH1</name>
</gene>
<proteinExistence type="inferred from homology"/>
<evidence type="ECO:0000250" key="1">
    <source>
        <dbReference type="UniProtKB" id="P35367"/>
    </source>
</evidence>
<evidence type="ECO:0000250" key="2">
    <source>
        <dbReference type="UniProtKB" id="P70174"/>
    </source>
</evidence>
<evidence type="ECO:0000255" key="3"/>
<evidence type="ECO:0000255" key="4">
    <source>
        <dbReference type="PROSITE-ProRule" id="PRU00521"/>
    </source>
</evidence>
<evidence type="ECO:0000256" key="5">
    <source>
        <dbReference type="SAM" id="MobiDB-lite"/>
    </source>
</evidence>
<evidence type="ECO:0000305" key="6"/>
<dbReference type="EMBL" id="AB041382">
    <property type="protein sequence ID" value="BAA94467.1"/>
    <property type="molecule type" value="Genomic_DNA"/>
</dbReference>
<dbReference type="RefSeq" id="XP_018878424.1">
    <property type="nucleotide sequence ID" value="XM_019022879.4"/>
</dbReference>
<dbReference type="RefSeq" id="XP_055236973.1">
    <property type="nucleotide sequence ID" value="XM_055380998.2"/>
</dbReference>
<dbReference type="RefSeq" id="XP_055236974.1">
    <property type="nucleotide sequence ID" value="XM_055380999.2"/>
</dbReference>
<dbReference type="RefSeq" id="XP_055236975.1">
    <property type="nucleotide sequence ID" value="XM_055381000.2"/>
</dbReference>
<dbReference type="RefSeq" id="XP_055236976.1">
    <property type="nucleotide sequence ID" value="XM_055381001.2"/>
</dbReference>
<dbReference type="SMR" id="Q9N2B1"/>
<dbReference type="FunCoup" id="Q9N2B1">
    <property type="interactions" value="948"/>
</dbReference>
<dbReference type="STRING" id="9593.ENSGGOP00000049168"/>
<dbReference type="GlyCosmos" id="Q9N2B1">
    <property type="glycosylation" value="2 sites, No reported glycans"/>
</dbReference>
<dbReference type="Ensembl" id="ENSGGOT00000055924.1">
    <property type="protein sequence ID" value="ENSGGOP00000049168.1"/>
    <property type="gene ID" value="ENSGGOG00000038168.1"/>
</dbReference>
<dbReference type="GeneID" id="101128052"/>
<dbReference type="KEGG" id="ggo:101128052"/>
<dbReference type="CTD" id="3269"/>
<dbReference type="eggNOG" id="KOG4220">
    <property type="taxonomic scope" value="Eukaryota"/>
</dbReference>
<dbReference type="GeneTree" id="ENSGT00940000160690"/>
<dbReference type="HOGENOM" id="CLU_009579_11_2_1"/>
<dbReference type="InParanoid" id="Q9N2B1"/>
<dbReference type="OMA" id="ITFMVMA"/>
<dbReference type="OrthoDB" id="4378at9604"/>
<dbReference type="Proteomes" id="UP000001519">
    <property type="component" value="Chromosome 3"/>
</dbReference>
<dbReference type="Bgee" id="ENSGGOG00000038168">
    <property type="expression patterns" value="Expressed in prefrontal cortex and 3 other cell types or tissues"/>
</dbReference>
<dbReference type="GO" id="GO:0005829">
    <property type="term" value="C:cytosol"/>
    <property type="evidence" value="ECO:0007669"/>
    <property type="project" value="Ensembl"/>
</dbReference>
<dbReference type="GO" id="GO:0030425">
    <property type="term" value="C:dendrite"/>
    <property type="evidence" value="ECO:0000318"/>
    <property type="project" value="GO_Central"/>
</dbReference>
<dbReference type="GO" id="GO:0005886">
    <property type="term" value="C:plasma membrane"/>
    <property type="evidence" value="ECO:0000250"/>
    <property type="project" value="UniProtKB"/>
</dbReference>
<dbReference type="GO" id="GO:0045202">
    <property type="term" value="C:synapse"/>
    <property type="evidence" value="ECO:0007669"/>
    <property type="project" value="GOC"/>
</dbReference>
<dbReference type="GO" id="GO:0004969">
    <property type="term" value="F:histamine receptor activity"/>
    <property type="evidence" value="ECO:0000250"/>
    <property type="project" value="UniProtKB"/>
</dbReference>
<dbReference type="GO" id="GO:0071420">
    <property type="term" value="P:cellular response to histamine"/>
    <property type="evidence" value="ECO:0000250"/>
    <property type="project" value="UniProtKB"/>
</dbReference>
<dbReference type="GO" id="GO:0007268">
    <property type="term" value="P:chemical synaptic transmission"/>
    <property type="evidence" value="ECO:0000318"/>
    <property type="project" value="GO_Central"/>
</dbReference>
<dbReference type="GO" id="GO:0007186">
    <property type="term" value="P:G protein-coupled receptor signaling pathway"/>
    <property type="evidence" value="ECO:0000250"/>
    <property type="project" value="UniProtKB"/>
</dbReference>
<dbReference type="GO" id="GO:0007187">
    <property type="term" value="P:G protein-coupled receptor signaling pathway, coupled to cyclic nucleotide second messenger"/>
    <property type="evidence" value="ECO:0000318"/>
    <property type="project" value="GO_Central"/>
</dbReference>
<dbReference type="GO" id="GO:0007613">
    <property type="term" value="P:memory"/>
    <property type="evidence" value="ECO:0007669"/>
    <property type="project" value="Ensembl"/>
</dbReference>
<dbReference type="GO" id="GO:0045907">
    <property type="term" value="P:positive regulation of vasoconstriction"/>
    <property type="evidence" value="ECO:0007669"/>
    <property type="project" value="InterPro"/>
</dbReference>
<dbReference type="GO" id="GO:0048167">
    <property type="term" value="P:regulation of synaptic plasticity"/>
    <property type="evidence" value="ECO:0007669"/>
    <property type="project" value="Ensembl"/>
</dbReference>
<dbReference type="GO" id="GO:0043114">
    <property type="term" value="P:regulation of vascular permeability"/>
    <property type="evidence" value="ECO:0007669"/>
    <property type="project" value="InterPro"/>
</dbReference>
<dbReference type="GO" id="GO:0008542">
    <property type="term" value="P:visual learning"/>
    <property type="evidence" value="ECO:0007669"/>
    <property type="project" value="Ensembl"/>
</dbReference>
<dbReference type="CDD" id="cd15050">
    <property type="entry name" value="7tmA_Histamine_H1R"/>
    <property type="match status" value="1"/>
</dbReference>
<dbReference type="FunFam" id="1.20.1070.10:FF:000147">
    <property type="entry name" value="Histamine H1 receptor"/>
    <property type="match status" value="1"/>
</dbReference>
<dbReference type="FunFam" id="1.20.1070.10:FF:000189">
    <property type="entry name" value="Histamine H1 receptor"/>
    <property type="match status" value="1"/>
</dbReference>
<dbReference type="Gene3D" id="1.20.1070.10">
    <property type="entry name" value="Rhodopsin 7-helix transmembrane proteins"/>
    <property type="match status" value="2"/>
</dbReference>
<dbReference type="InterPro" id="IPR000276">
    <property type="entry name" value="GPCR_Rhodpsn"/>
</dbReference>
<dbReference type="InterPro" id="IPR017452">
    <property type="entry name" value="GPCR_Rhodpsn_7TM"/>
</dbReference>
<dbReference type="InterPro" id="IPR000921">
    <property type="entry name" value="Histamine_H1_rcpt"/>
</dbReference>
<dbReference type="PANTHER" id="PTHR24247">
    <property type="entry name" value="5-HYDROXYTRYPTAMINE RECEPTOR"/>
    <property type="match status" value="1"/>
</dbReference>
<dbReference type="PANTHER" id="PTHR24247:SF223">
    <property type="entry name" value="HISTAMINE H1 RECEPTOR"/>
    <property type="match status" value="1"/>
</dbReference>
<dbReference type="Pfam" id="PF00001">
    <property type="entry name" value="7tm_1"/>
    <property type="match status" value="1"/>
</dbReference>
<dbReference type="PRINTS" id="PR00237">
    <property type="entry name" value="GPCRRHODOPSN"/>
</dbReference>
<dbReference type="PRINTS" id="PR00530">
    <property type="entry name" value="HISTAMINEH1R"/>
</dbReference>
<dbReference type="SMART" id="SM01381">
    <property type="entry name" value="7TM_GPCR_Srsx"/>
    <property type="match status" value="1"/>
</dbReference>
<dbReference type="SUPFAM" id="SSF81321">
    <property type="entry name" value="Family A G protein-coupled receptor-like"/>
    <property type="match status" value="1"/>
</dbReference>
<dbReference type="PROSITE" id="PS00237">
    <property type="entry name" value="G_PROTEIN_RECEP_F1_1"/>
    <property type="match status" value="1"/>
</dbReference>
<dbReference type="PROSITE" id="PS50262">
    <property type="entry name" value="G_PROTEIN_RECEP_F1_2"/>
    <property type="match status" value="1"/>
</dbReference>
<name>HRH1_GORGO</name>
<keyword id="KW-1003">Cell membrane</keyword>
<keyword id="KW-1015">Disulfide bond</keyword>
<keyword id="KW-0297">G-protein coupled receptor</keyword>
<keyword id="KW-0325">Glycoprotein</keyword>
<keyword id="KW-0472">Membrane</keyword>
<keyword id="KW-0597">Phosphoprotein</keyword>
<keyword id="KW-0675">Receptor</keyword>
<keyword id="KW-1185">Reference proteome</keyword>
<keyword id="KW-0807">Transducer</keyword>
<keyword id="KW-0812">Transmembrane</keyword>
<keyword id="KW-1133">Transmembrane helix</keyword>
<comment type="function">
    <text evidence="1 2">G-protein-coupled receptor for histamine, a biogenic amine that functions as an immune modulator and a neurotransmitter (By similarity). Through the H1 receptor, histamine mediates the contraction of smooth muscles and increases capillary permeability due to contraction of terminal venules. Also mediates neurotransmission in the central nervous system and thereby regulates circadian rhythms, emotional and locomotor activities as well as cognitive functions (By similarity).</text>
</comment>
<comment type="subcellular location">
    <subcellularLocation>
        <location evidence="1">Cell membrane</location>
        <topology evidence="1">Multi-pass membrane protein</topology>
    </subcellularLocation>
</comment>
<comment type="domain">
    <text evidence="1">Histamine activates the receptor by forming hydrogen bonds with transmembrane domains 3 and 6, squashing the ligand-binding pocket on the extracellular side and opening the cavity for G-protein engagement on the intracellular side.</text>
</comment>
<comment type="PTM">
    <text evidence="1">Phosphorylation at sites in the second and third cytoplasmic loops independently contribute to agonist-induced receptor down-regulation.</text>
</comment>
<comment type="similarity">
    <text evidence="4">Belongs to the G-protein coupled receptor 1 family.</text>
</comment>
<sequence length="487" mass="55623">MSLPNSSCLLEDKMCESNKTTMASPQLMPLVVVLSTICLVTVGLNLLVLYAVRSERKLHTVGNLYIVSLSVADLIVGAVVMPMNILYLLMSKWSLGRPLCLFWLSMDYVASTASIFSVFILCIDRYRSVQQPLRYLKYRTKTRASATILGAWFLSFLWVIPILGWNHFMQQTSVRREDKCETDFYDVTWFKVMTAIINFYLPTLLMLWFYAKIYKAVRQHCQHRELINGSLPSFSEIKLRPENPKGDAKKPGKESPWEVLKRKPKDAGGGSVLKSPSQTPKEMKSPVVFSQEDDREVDKLHCFPLDIVHMQTAAEGSSRDYVAVNQSHGQLKTDEQGLNTHGASEISEDQMLGDSQSFSRTDSDTTTETASGKGKLRSGSNTGLGYIKFTWKRLRSHSRQYVSGLHMNRERKAAKQLGFIMAAFILCWIPYFIFFMVIAFCKNCCNEHLHMFTIWLGYINSTLNPLIYPLCNENFKKTFKRILHIRS</sequence>
<protein>
    <recommendedName>
        <fullName evidence="1">Histamine H1 receptor</fullName>
        <shortName evidence="1">H1R</shortName>
        <shortName evidence="1">HH1R</shortName>
    </recommendedName>
</protein>
<organism>
    <name type="scientific">Gorilla gorilla gorilla</name>
    <name type="common">Western lowland gorilla</name>
    <dbReference type="NCBI Taxonomy" id="9595"/>
    <lineage>
        <taxon>Eukaryota</taxon>
        <taxon>Metazoa</taxon>
        <taxon>Chordata</taxon>
        <taxon>Craniata</taxon>
        <taxon>Vertebrata</taxon>
        <taxon>Euteleostomi</taxon>
        <taxon>Mammalia</taxon>
        <taxon>Eutheria</taxon>
        <taxon>Euarchontoglires</taxon>
        <taxon>Primates</taxon>
        <taxon>Haplorrhini</taxon>
        <taxon>Catarrhini</taxon>
        <taxon>Hominidae</taxon>
        <taxon>Gorilla</taxon>
    </lineage>
</organism>